<proteinExistence type="predicted"/>
<sequence length="132" mass="14267">MVNFCISDAEIGINVVIVLFPVNGLVTAPSVLYPLEYFSLVSSILEHSMICLSLILAGKIDFLFFIILLLAIVDITSGKYFSTFSISSIFKPAIYSAILLLVSIPFLAKKSYVVFTISVLTGSSISLSTSAE</sequence>
<accession>P20565</accession>
<organismHost>
    <name type="scientific">Homo sapiens</name>
    <name type="common">Human</name>
    <dbReference type="NCBI Taxonomy" id="9606"/>
</organismHost>
<protein>
    <recommendedName>
        <fullName>Uncharacterized 14.3 kDa protein</fullName>
    </recommendedName>
</protein>
<organism>
    <name type="scientific">Vaccinia virus (strain Copenhagen)</name>
    <name type="common">VACV</name>
    <dbReference type="NCBI Taxonomy" id="10249"/>
    <lineage>
        <taxon>Viruses</taxon>
        <taxon>Varidnaviria</taxon>
        <taxon>Bamfordvirae</taxon>
        <taxon>Nucleocytoviricota</taxon>
        <taxon>Pokkesviricetes</taxon>
        <taxon>Chitovirales</taxon>
        <taxon>Poxviridae</taxon>
        <taxon>Chordopoxvirinae</taxon>
        <taxon>Orthopoxvirus</taxon>
        <taxon>Vaccinia virus</taxon>
    </lineage>
</organism>
<keyword id="KW-1185">Reference proteome</keyword>
<gene>
    <name type="ORF">G ORF A</name>
</gene>
<dbReference type="EMBL" id="M35027">
    <property type="protein sequence ID" value="AAA48072.1"/>
    <property type="molecule type" value="Genomic_DNA"/>
</dbReference>
<dbReference type="PIR" id="F42512">
    <property type="entry name" value="F42512"/>
</dbReference>
<dbReference type="SMR" id="P20565"/>
<dbReference type="Proteomes" id="UP000008269">
    <property type="component" value="Segment"/>
</dbReference>
<name>YVGA_VACCC</name>
<feature type="chain" id="PRO_0000099717" description="Uncharacterized 14.3 kDa protein">
    <location>
        <begin position="1"/>
        <end position="132"/>
    </location>
</feature>
<reference key="1">
    <citation type="journal article" date="1990" name="Virology">
        <title>The complete DNA sequence of vaccinia virus.</title>
        <authorList>
            <person name="Goebel S.J."/>
            <person name="Johnson G.P."/>
            <person name="Perkus M.E."/>
            <person name="Davis S.W."/>
            <person name="Winslow J.P."/>
            <person name="Paoletti E."/>
        </authorList>
    </citation>
    <scope>NUCLEOTIDE SEQUENCE [LARGE SCALE GENOMIC DNA]</scope>
</reference>
<reference key="2">
    <citation type="journal article" date="1990" name="Virology">
        <title>Appendix to 'The complete DNA sequence of vaccinia virus'.</title>
        <authorList>
            <person name="Goebel S.J."/>
            <person name="Johnson G.P."/>
            <person name="Perkus M.E."/>
            <person name="Davis S.W."/>
            <person name="Winslow J.P."/>
            <person name="Paoletti E."/>
        </authorList>
    </citation>
    <scope>COMPLETE GENOME</scope>
</reference>